<dbReference type="EMBL" id="BX908798">
    <property type="protein sequence ID" value="CAF24052.1"/>
    <property type="molecule type" value="Genomic_DNA"/>
</dbReference>
<dbReference type="RefSeq" id="WP_011175877.1">
    <property type="nucleotide sequence ID" value="NC_005861.2"/>
</dbReference>
<dbReference type="SMR" id="Q6MBJ7"/>
<dbReference type="STRING" id="264201.pc1328"/>
<dbReference type="KEGG" id="pcu:PC_RS06390"/>
<dbReference type="eggNOG" id="COG0217">
    <property type="taxonomic scope" value="Bacteria"/>
</dbReference>
<dbReference type="HOGENOM" id="CLU_062974_3_0_0"/>
<dbReference type="OrthoDB" id="9781053at2"/>
<dbReference type="Proteomes" id="UP000000529">
    <property type="component" value="Chromosome"/>
</dbReference>
<dbReference type="GO" id="GO:0005829">
    <property type="term" value="C:cytosol"/>
    <property type="evidence" value="ECO:0007669"/>
    <property type="project" value="TreeGrafter"/>
</dbReference>
<dbReference type="GO" id="GO:0003677">
    <property type="term" value="F:DNA binding"/>
    <property type="evidence" value="ECO:0007669"/>
    <property type="project" value="UniProtKB-UniRule"/>
</dbReference>
<dbReference type="GO" id="GO:0006355">
    <property type="term" value="P:regulation of DNA-templated transcription"/>
    <property type="evidence" value="ECO:0007669"/>
    <property type="project" value="UniProtKB-UniRule"/>
</dbReference>
<dbReference type="FunFam" id="1.10.10.200:FF:000002">
    <property type="entry name" value="Probable transcriptional regulatory protein CLM62_37755"/>
    <property type="match status" value="1"/>
</dbReference>
<dbReference type="Gene3D" id="1.10.10.200">
    <property type="match status" value="1"/>
</dbReference>
<dbReference type="Gene3D" id="3.30.70.980">
    <property type="match status" value="2"/>
</dbReference>
<dbReference type="HAMAP" id="MF_00693">
    <property type="entry name" value="Transcrip_reg_TACO1"/>
    <property type="match status" value="1"/>
</dbReference>
<dbReference type="InterPro" id="IPR017856">
    <property type="entry name" value="Integrase-like_N"/>
</dbReference>
<dbReference type="InterPro" id="IPR048300">
    <property type="entry name" value="TACO1_YebC-like_2nd/3rd_dom"/>
</dbReference>
<dbReference type="InterPro" id="IPR049083">
    <property type="entry name" value="TACO1_YebC_N"/>
</dbReference>
<dbReference type="InterPro" id="IPR002876">
    <property type="entry name" value="Transcrip_reg_TACO1-like"/>
</dbReference>
<dbReference type="InterPro" id="IPR026564">
    <property type="entry name" value="Transcrip_reg_TACO1-like_dom3"/>
</dbReference>
<dbReference type="InterPro" id="IPR029072">
    <property type="entry name" value="YebC-like"/>
</dbReference>
<dbReference type="NCBIfam" id="NF001030">
    <property type="entry name" value="PRK00110.1"/>
    <property type="match status" value="1"/>
</dbReference>
<dbReference type="NCBIfam" id="NF009044">
    <property type="entry name" value="PRK12378.1"/>
    <property type="match status" value="1"/>
</dbReference>
<dbReference type="NCBIfam" id="TIGR01033">
    <property type="entry name" value="YebC/PmpR family DNA-binding transcriptional regulator"/>
    <property type="match status" value="1"/>
</dbReference>
<dbReference type="PANTHER" id="PTHR12532:SF6">
    <property type="entry name" value="TRANSCRIPTIONAL REGULATORY PROTEIN YEBC-RELATED"/>
    <property type="match status" value="1"/>
</dbReference>
<dbReference type="PANTHER" id="PTHR12532">
    <property type="entry name" value="TRANSLATIONAL ACTIVATOR OF CYTOCHROME C OXIDASE 1"/>
    <property type="match status" value="1"/>
</dbReference>
<dbReference type="Pfam" id="PF20772">
    <property type="entry name" value="TACO1_YebC_N"/>
    <property type="match status" value="1"/>
</dbReference>
<dbReference type="Pfam" id="PF01709">
    <property type="entry name" value="Transcrip_reg"/>
    <property type="match status" value="1"/>
</dbReference>
<dbReference type="SUPFAM" id="SSF75625">
    <property type="entry name" value="YebC-like"/>
    <property type="match status" value="1"/>
</dbReference>
<evidence type="ECO:0000255" key="1">
    <source>
        <dbReference type="HAMAP-Rule" id="MF_00693"/>
    </source>
</evidence>
<keyword id="KW-0963">Cytoplasm</keyword>
<keyword id="KW-0238">DNA-binding</keyword>
<keyword id="KW-1185">Reference proteome</keyword>
<keyword id="KW-0804">Transcription</keyword>
<keyword id="KW-0805">Transcription regulation</keyword>
<reference key="1">
    <citation type="journal article" date="2004" name="Science">
        <title>Illuminating the evolutionary history of chlamydiae.</title>
        <authorList>
            <person name="Horn M."/>
            <person name="Collingro A."/>
            <person name="Schmitz-Esser S."/>
            <person name="Beier C.L."/>
            <person name="Purkhold U."/>
            <person name="Fartmann B."/>
            <person name="Brandt P."/>
            <person name="Nyakatura G.J."/>
            <person name="Droege M."/>
            <person name="Frishman D."/>
            <person name="Rattei T."/>
            <person name="Mewes H.-W."/>
            <person name="Wagner M."/>
        </authorList>
    </citation>
    <scope>NUCLEOTIDE SEQUENCE [LARGE SCALE GENOMIC DNA]</scope>
    <source>
        <strain>UWE25</strain>
    </source>
</reference>
<accession>Q6MBJ7</accession>
<organism>
    <name type="scientific">Protochlamydia amoebophila (strain UWE25)</name>
    <dbReference type="NCBI Taxonomy" id="264201"/>
    <lineage>
        <taxon>Bacteria</taxon>
        <taxon>Pseudomonadati</taxon>
        <taxon>Chlamydiota</taxon>
        <taxon>Chlamydiia</taxon>
        <taxon>Parachlamydiales</taxon>
        <taxon>Parachlamydiaceae</taxon>
        <taxon>Candidatus Protochlamydia</taxon>
    </lineage>
</organism>
<feature type="chain" id="PRO_0000175860" description="Probable transcriptional regulatory protein pc1328">
    <location>
        <begin position="1"/>
        <end position="245"/>
    </location>
</feature>
<proteinExistence type="inferred from homology"/>
<comment type="subcellular location">
    <subcellularLocation>
        <location evidence="1">Cytoplasm</location>
    </subcellularLocation>
</comment>
<comment type="similarity">
    <text evidence="1">Belongs to the TACO1 family.</text>
</comment>
<protein>
    <recommendedName>
        <fullName evidence="1">Probable transcriptional regulatory protein pc1328</fullName>
    </recommendedName>
</protein>
<gene>
    <name type="ordered locus">pc1328</name>
</gene>
<sequence length="245" mass="27279">MAGHSKWANIKHRKGKADAKKGKIFSRIAKEIISAVKLGGADQKNNPRLRLALQKARDANMPNENIDRNIKKASSADQEDYHEMTYELYGHGGVGIVVDVMTDNKNRISSDMRIATNKRGGTVATPGAVTFNFDRKGILQISKKNAIEEELFLAATEAGAEDFEVDNDVFIITTDPSHLYSVKDAINHLGFACEEAELGMIPRTYVECSVETAKDNLALIEWLEELEDVDAVYHNMKIPEELENE</sequence>
<name>Y1328_PARUW</name>